<feature type="chain" id="PRO_0000291311" description="Probable glutathione transferase">
    <location>
        <begin position="1" status="less than"/>
        <end position="92" status="greater than"/>
    </location>
</feature>
<feature type="domain" description="GST N-terminal">
    <location>
        <begin position="1" status="less than"/>
        <end position="71"/>
    </location>
</feature>
<feature type="active site" description="Nucleophile" evidence="2">
    <location>
        <position position="3"/>
    </location>
</feature>
<feature type="binding site" evidence="3">
    <location>
        <position position="30"/>
    </location>
    <ligand>
        <name>glutathione</name>
        <dbReference type="ChEBI" id="CHEBI:57925"/>
    </ligand>
</feature>
<feature type="binding site" evidence="2">
    <location>
        <position position="43"/>
    </location>
    <ligand>
        <name>glutathione</name>
        <dbReference type="ChEBI" id="CHEBI:57925"/>
    </ligand>
</feature>
<feature type="binding site" evidence="3">
    <location>
        <begin position="55"/>
        <end position="56"/>
    </location>
    <ligand>
        <name>glutathione</name>
        <dbReference type="ChEBI" id="CHEBI:57925"/>
    </ligand>
</feature>
<feature type="non-terminal residue" evidence="6">
    <location>
        <position position="1"/>
    </location>
</feature>
<feature type="non-terminal residue" evidence="6">
    <location>
        <position position="92"/>
    </location>
</feature>
<protein>
    <recommendedName>
        <fullName>Probable glutathione transferase</fullName>
        <ecNumber>2.5.1.18</ecNumber>
    </recommendedName>
    <alternativeName>
        <fullName>Glutathione-dependent dehydroascorbate reductase</fullName>
        <ecNumber>1.8.5.1</ecNumber>
    </alternativeName>
    <alternativeName>
        <fullName>Monomethylarsonic acid reductase</fullName>
        <shortName>MMA(V) reductase</shortName>
        <ecNumber>1.20.4.2</ecNumber>
    </alternativeName>
    <alternativeName>
        <fullName>Protein 9</fullName>
    </alternativeName>
</protein>
<name>GSTO_APLCA</name>
<dbReference type="EC" id="2.5.1.18"/>
<dbReference type="EC" id="1.8.5.1"/>
<dbReference type="EC" id="1.20.4.2"/>
<dbReference type="SMR" id="P81124"/>
<dbReference type="OrthoDB" id="4951845at2759"/>
<dbReference type="Proteomes" id="UP000694888">
    <property type="component" value="Unplaced"/>
</dbReference>
<dbReference type="GO" id="GO:0005737">
    <property type="term" value="C:cytoplasm"/>
    <property type="evidence" value="ECO:0007669"/>
    <property type="project" value="TreeGrafter"/>
</dbReference>
<dbReference type="GO" id="GO:0045174">
    <property type="term" value="F:glutathione dehydrogenase (ascorbate) activity"/>
    <property type="evidence" value="ECO:0007669"/>
    <property type="project" value="UniProtKB-EC"/>
</dbReference>
<dbReference type="GO" id="GO:0004364">
    <property type="term" value="F:glutathione transferase activity"/>
    <property type="evidence" value="ECO:0007669"/>
    <property type="project" value="UniProtKB-EC"/>
</dbReference>
<dbReference type="GO" id="GO:0050610">
    <property type="term" value="F:methylarsonate reductase activity"/>
    <property type="evidence" value="ECO:0007669"/>
    <property type="project" value="UniProtKB-EC"/>
</dbReference>
<dbReference type="Gene3D" id="3.40.30.10">
    <property type="entry name" value="Glutaredoxin"/>
    <property type="match status" value="1"/>
</dbReference>
<dbReference type="InterPro" id="IPR004045">
    <property type="entry name" value="Glutathione_S-Trfase_N"/>
</dbReference>
<dbReference type="InterPro" id="IPR050983">
    <property type="entry name" value="GST_Omega/HSP26"/>
</dbReference>
<dbReference type="InterPro" id="IPR036249">
    <property type="entry name" value="Thioredoxin-like_sf"/>
</dbReference>
<dbReference type="PANTHER" id="PTHR43968">
    <property type="match status" value="1"/>
</dbReference>
<dbReference type="PANTHER" id="PTHR43968:SF6">
    <property type="entry name" value="GLUTATHIONE S-TRANSFERASE OMEGA"/>
    <property type="match status" value="1"/>
</dbReference>
<dbReference type="Pfam" id="PF13409">
    <property type="entry name" value="GST_N_2"/>
    <property type="match status" value="1"/>
</dbReference>
<dbReference type="SUPFAM" id="SSF52833">
    <property type="entry name" value="Thioredoxin-like"/>
    <property type="match status" value="1"/>
</dbReference>
<dbReference type="PROSITE" id="PS50404">
    <property type="entry name" value="GST_NTER"/>
    <property type="match status" value="1"/>
</dbReference>
<comment type="function">
    <text evidence="1">Exhibits glutathione-dependent thiol transferase activity. Has dehydroascorbate reductase activity and may contribute to the recycling of ascorbic acid. Participates in the biotransformation of inorganic arsenic and reduces monomethylarsonic acid (MMA) (By similarity).</text>
</comment>
<comment type="catalytic activity">
    <reaction evidence="2">
        <text>RX + glutathione = an S-substituted glutathione + a halide anion + H(+)</text>
        <dbReference type="Rhea" id="RHEA:16437"/>
        <dbReference type="ChEBI" id="CHEBI:15378"/>
        <dbReference type="ChEBI" id="CHEBI:16042"/>
        <dbReference type="ChEBI" id="CHEBI:17792"/>
        <dbReference type="ChEBI" id="CHEBI:57925"/>
        <dbReference type="ChEBI" id="CHEBI:90779"/>
        <dbReference type="EC" id="2.5.1.18"/>
    </reaction>
</comment>
<comment type="catalytic activity">
    <reaction>
        <text>L-dehydroascorbate + 2 glutathione = glutathione disulfide + L-ascorbate</text>
        <dbReference type="Rhea" id="RHEA:24424"/>
        <dbReference type="ChEBI" id="CHEBI:38290"/>
        <dbReference type="ChEBI" id="CHEBI:57925"/>
        <dbReference type="ChEBI" id="CHEBI:58297"/>
        <dbReference type="ChEBI" id="CHEBI:58539"/>
        <dbReference type="EC" id="1.8.5.1"/>
    </reaction>
</comment>
<comment type="catalytic activity">
    <reaction>
        <text>methylarsonate + 2 glutathione + H(+) = methylarsonous acid + glutathione disulfide + H2O</text>
        <dbReference type="Rhea" id="RHEA:15969"/>
        <dbReference type="ChEBI" id="CHEBI:15377"/>
        <dbReference type="ChEBI" id="CHEBI:15378"/>
        <dbReference type="ChEBI" id="CHEBI:17826"/>
        <dbReference type="ChEBI" id="CHEBI:33409"/>
        <dbReference type="ChEBI" id="CHEBI:57925"/>
        <dbReference type="ChEBI" id="CHEBI:58297"/>
        <dbReference type="EC" id="1.20.4.2"/>
    </reaction>
</comment>
<comment type="induction">
    <text evidence="5">By treatment with KCl and serotonin.</text>
</comment>
<comment type="similarity">
    <text evidence="4">Belongs to the GST superfamily. Omega family.</text>
</comment>
<evidence type="ECO:0000250" key="1"/>
<evidence type="ECO:0000250" key="2">
    <source>
        <dbReference type="UniProtKB" id="P78417"/>
    </source>
</evidence>
<evidence type="ECO:0000250" key="3">
    <source>
        <dbReference type="UniProtKB" id="Q9H4Y5"/>
    </source>
</evidence>
<evidence type="ECO:0000255" key="4"/>
<evidence type="ECO:0000269" key="5">
    <source>
    </source>
</evidence>
<evidence type="ECO:0000303" key="6">
    <source>
    </source>
</evidence>
<evidence type="ECO:0000305" key="7"/>
<reference evidence="7" key="1">
    <citation type="journal article" date="1994" name="Proc. Natl. Acad. Sci. U.S.A.">
        <title>Effects on protein synthesis produced by pairing depolarization with serotonin, an analogue of associative learning in Aplysia.</title>
        <authorList>
            <person name="Noel F."/>
            <person name="Koumenis C."/>
            <person name="Nunez-Regueiro M."/>
            <person name="Raju U."/>
            <person name="Byrne J.H."/>
            <person name="Eskin A."/>
        </authorList>
    </citation>
    <scope>PROTEIN SEQUENCE OF 1-36 AND 56-92</scope>
    <scope>NUCLEOTIDE SEQUENCE [MRNA] OF 37-55</scope>
    <scope>INDUCTION</scope>
    <source>
        <tissue evidence="5">Abdominal ganglion</tissue>
    </source>
</reference>
<proteinExistence type="evidence at protein level"/>
<accession>P81124</accession>
<sequence>RTCPYAQRARLIIAAKGISADLVNVDLNKKPDHFFDLNPYGEVPVVLHNGGHVYESLIAAEYLEEAFPDPPLFAKEALVRANERIYFNHATK</sequence>
<organism>
    <name type="scientific">Aplysia californica</name>
    <name type="common">California sea hare</name>
    <dbReference type="NCBI Taxonomy" id="6500"/>
    <lineage>
        <taxon>Eukaryota</taxon>
        <taxon>Metazoa</taxon>
        <taxon>Spiralia</taxon>
        <taxon>Lophotrochozoa</taxon>
        <taxon>Mollusca</taxon>
        <taxon>Gastropoda</taxon>
        <taxon>Heterobranchia</taxon>
        <taxon>Euthyneura</taxon>
        <taxon>Tectipleura</taxon>
        <taxon>Aplysiida</taxon>
        <taxon>Aplysioidea</taxon>
        <taxon>Aplysiidae</taxon>
        <taxon>Aplysia</taxon>
    </lineage>
</organism>
<keyword id="KW-0903">Direct protein sequencing</keyword>
<keyword id="KW-0560">Oxidoreductase</keyword>
<keyword id="KW-0808">Transferase</keyword>